<dbReference type="EC" id="3.1.-.-" evidence="1"/>
<dbReference type="EMBL" id="BX640435">
    <property type="protein sequence ID" value="CAE39214.1"/>
    <property type="molecule type" value="Genomic_DNA"/>
</dbReference>
<dbReference type="SMR" id="Q7W3U6"/>
<dbReference type="KEGG" id="bpa:BPP3931"/>
<dbReference type="HOGENOM" id="CLU_098240_3_2_4"/>
<dbReference type="Proteomes" id="UP000001421">
    <property type="component" value="Chromosome"/>
</dbReference>
<dbReference type="GO" id="GO:0005829">
    <property type="term" value="C:cytosol"/>
    <property type="evidence" value="ECO:0007669"/>
    <property type="project" value="TreeGrafter"/>
</dbReference>
<dbReference type="GO" id="GO:0004518">
    <property type="term" value="F:nuclease activity"/>
    <property type="evidence" value="ECO:0007669"/>
    <property type="project" value="UniProtKB-KW"/>
</dbReference>
<dbReference type="GO" id="GO:0000967">
    <property type="term" value="P:rRNA 5'-end processing"/>
    <property type="evidence" value="ECO:0007669"/>
    <property type="project" value="UniProtKB-UniRule"/>
</dbReference>
<dbReference type="CDD" id="cd16964">
    <property type="entry name" value="YqgF"/>
    <property type="match status" value="1"/>
</dbReference>
<dbReference type="Gene3D" id="3.30.420.140">
    <property type="entry name" value="YqgF/RNase H-like domain"/>
    <property type="match status" value="1"/>
</dbReference>
<dbReference type="HAMAP" id="MF_00651">
    <property type="entry name" value="Nuclease_YqgF"/>
    <property type="match status" value="1"/>
</dbReference>
<dbReference type="InterPro" id="IPR012337">
    <property type="entry name" value="RNaseH-like_sf"/>
</dbReference>
<dbReference type="InterPro" id="IPR005227">
    <property type="entry name" value="YqgF"/>
</dbReference>
<dbReference type="InterPro" id="IPR006641">
    <property type="entry name" value="YqgF/RNaseH-like_dom"/>
</dbReference>
<dbReference type="InterPro" id="IPR037027">
    <property type="entry name" value="YqgF/RNaseH-like_dom_sf"/>
</dbReference>
<dbReference type="NCBIfam" id="TIGR00250">
    <property type="entry name" value="RNAse_H_YqgF"/>
    <property type="match status" value="1"/>
</dbReference>
<dbReference type="PANTHER" id="PTHR33317">
    <property type="entry name" value="POLYNUCLEOTIDYL TRANSFERASE, RIBONUCLEASE H-LIKE SUPERFAMILY PROTEIN"/>
    <property type="match status" value="1"/>
</dbReference>
<dbReference type="PANTHER" id="PTHR33317:SF4">
    <property type="entry name" value="POLYNUCLEOTIDYL TRANSFERASE, RIBONUCLEASE H-LIKE SUPERFAMILY PROTEIN"/>
    <property type="match status" value="1"/>
</dbReference>
<dbReference type="Pfam" id="PF03652">
    <property type="entry name" value="RuvX"/>
    <property type="match status" value="1"/>
</dbReference>
<dbReference type="SMART" id="SM00732">
    <property type="entry name" value="YqgFc"/>
    <property type="match status" value="1"/>
</dbReference>
<dbReference type="SUPFAM" id="SSF53098">
    <property type="entry name" value="Ribonuclease H-like"/>
    <property type="match status" value="1"/>
</dbReference>
<keyword id="KW-0963">Cytoplasm</keyword>
<keyword id="KW-0378">Hydrolase</keyword>
<keyword id="KW-0540">Nuclease</keyword>
<keyword id="KW-0690">Ribosome biogenesis</keyword>
<evidence type="ECO:0000255" key="1">
    <source>
        <dbReference type="HAMAP-Rule" id="MF_00651"/>
    </source>
</evidence>
<gene>
    <name type="ordered locus">BPP3931</name>
</gene>
<comment type="function">
    <text evidence="1">Could be a nuclease involved in processing of the 5'-end of pre-16S rRNA.</text>
</comment>
<comment type="subcellular location">
    <subcellularLocation>
        <location evidence="1">Cytoplasm</location>
    </subcellularLocation>
</comment>
<comment type="similarity">
    <text evidence="1">Belongs to the YqgF nuclease family.</text>
</comment>
<feature type="chain" id="PRO_0000172029" description="Putative pre-16S rRNA nuclease">
    <location>
        <begin position="1"/>
        <end position="133"/>
    </location>
</feature>
<protein>
    <recommendedName>
        <fullName evidence="1">Putative pre-16S rRNA nuclease</fullName>
        <ecNumber evidence="1">3.1.-.-</ecNumber>
    </recommendedName>
</protein>
<sequence length="133" mass="14619">MPEETLLAFDFGEKKIGIAIGNTLTRQARPLEIIFSETRAARFGRIGQLLQEWQPQRAVVGLPLTLDGQEQPASARARRFANQLHGRFGLAVELVDERGSSMEAQQLLGTHAADDAVAAAVILQRYLDTLPQP</sequence>
<proteinExistence type="inferred from homology"/>
<name>YQGF_BORPA</name>
<accession>Q7W3U6</accession>
<reference key="1">
    <citation type="journal article" date="2003" name="Nat. Genet.">
        <title>Comparative analysis of the genome sequences of Bordetella pertussis, Bordetella parapertussis and Bordetella bronchiseptica.</title>
        <authorList>
            <person name="Parkhill J."/>
            <person name="Sebaihia M."/>
            <person name="Preston A."/>
            <person name="Murphy L.D."/>
            <person name="Thomson N.R."/>
            <person name="Harris D.E."/>
            <person name="Holden M.T.G."/>
            <person name="Churcher C.M."/>
            <person name="Bentley S.D."/>
            <person name="Mungall K.L."/>
            <person name="Cerdeno-Tarraga A.-M."/>
            <person name="Temple L."/>
            <person name="James K.D."/>
            <person name="Harris B."/>
            <person name="Quail M.A."/>
            <person name="Achtman M."/>
            <person name="Atkin R."/>
            <person name="Baker S."/>
            <person name="Basham D."/>
            <person name="Bason N."/>
            <person name="Cherevach I."/>
            <person name="Chillingworth T."/>
            <person name="Collins M."/>
            <person name="Cronin A."/>
            <person name="Davis P."/>
            <person name="Doggett J."/>
            <person name="Feltwell T."/>
            <person name="Goble A."/>
            <person name="Hamlin N."/>
            <person name="Hauser H."/>
            <person name="Holroyd S."/>
            <person name="Jagels K."/>
            <person name="Leather S."/>
            <person name="Moule S."/>
            <person name="Norberczak H."/>
            <person name="O'Neil S."/>
            <person name="Ormond D."/>
            <person name="Price C."/>
            <person name="Rabbinowitsch E."/>
            <person name="Rutter S."/>
            <person name="Sanders M."/>
            <person name="Saunders D."/>
            <person name="Seeger K."/>
            <person name="Sharp S."/>
            <person name="Simmonds M."/>
            <person name="Skelton J."/>
            <person name="Squares R."/>
            <person name="Squares S."/>
            <person name="Stevens K."/>
            <person name="Unwin L."/>
            <person name="Whitehead S."/>
            <person name="Barrell B.G."/>
            <person name="Maskell D.J."/>
        </authorList>
    </citation>
    <scope>NUCLEOTIDE SEQUENCE [LARGE SCALE GENOMIC DNA]</scope>
    <source>
        <strain>12822 / ATCC BAA-587 / NCTC 13253</strain>
    </source>
</reference>
<organism>
    <name type="scientific">Bordetella parapertussis (strain 12822 / ATCC BAA-587 / NCTC 13253)</name>
    <dbReference type="NCBI Taxonomy" id="257311"/>
    <lineage>
        <taxon>Bacteria</taxon>
        <taxon>Pseudomonadati</taxon>
        <taxon>Pseudomonadota</taxon>
        <taxon>Betaproteobacteria</taxon>
        <taxon>Burkholderiales</taxon>
        <taxon>Alcaligenaceae</taxon>
        <taxon>Bordetella</taxon>
    </lineage>
</organism>